<feature type="chain" id="PRO_0000101755" description="Potassium channel subfamily K member 9">
    <location>
        <begin position="1"/>
        <end position="402"/>
    </location>
</feature>
<feature type="topological domain" description="Cytoplasmic" evidence="4">
    <location>
        <begin position="1"/>
        <end position="8"/>
    </location>
</feature>
<feature type="transmembrane region" description="Helical" evidence="4">
    <location>
        <begin position="9"/>
        <end position="29"/>
    </location>
</feature>
<feature type="topological domain" description="Extracellular" evidence="4">
    <location>
        <begin position="30"/>
        <end position="88"/>
    </location>
</feature>
<feature type="intramembrane region" description="Pore-forming; Name=Pore-forming 1" evidence="4">
    <location>
        <begin position="89"/>
        <end position="101"/>
    </location>
</feature>
<feature type="topological domain" description="Extracellular" evidence="4">
    <location>
        <begin position="102"/>
        <end position="107"/>
    </location>
</feature>
<feature type="transmembrane region" description="Helical" evidence="4">
    <location>
        <begin position="108"/>
        <end position="128"/>
    </location>
</feature>
<feature type="topological domain" description="Cytoplasmic" evidence="4">
    <location>
        <begin position="129"/>
        <end position="158"/>
    </location>
</feature>
<feature type="transmembrane region" description="Helical" evidence="4">
    <location>
        <begin position="159"/>
        <end position="179"/>
    </location>
</feature>
<feature type="topological domain" description="Extracellular" evidence="4">
    <location>
        <begin position="180"/>
        <end position="194"/>
    </location>
</feature>
<feature type="intramembrane region" description="Pore-forming; Name=Pore-forming 2" evidence="4">
    <location>
        <begin position="195"/>
        <end position="207"/>
    </location>
</feature>
<feature type="topological domain" description="Extracellular" evidence="4">
    <location>
        <begin position="208"/>
        <end position="218"/>
    </location>
</feature>
<feature type="transmembrane region" description="Helical" evidence="4">
    <location>
        <begin position="219"/>
        <end position="239"/>
    </location>
</feature>
<feature type="topological domain" description="Cytoplasmic" evidence="4">
    <location>
        <begin position="240"/>
        <end position="402"/>
    </location>
</feature>
<feature type="region of interest" description="Selectivity filter 1" evidence="3">
    <location>
        <begin position="93"/>
        <end position="98"/>
    </location>
</feature>
<feature type="region of interest" description="Selectivity filter 2" evidence="3">
    <location>
        <begin position="199"/>
        <end position="204"/>
    </location>
</feature>
<feature type="region of interest" description="X-gate" evidence="3">
    <location>
        <begin position="243"/>
        <end position="248"/>
    </location>
</feature>
<feature type="binding site" evidence="3">
    <location>
        <position position="93"/>
    </location>
    <ligand>
        <name>K(+)</name>
        <dbReference type="ChEBI" id="CHEBI:29103"/>
        <label>1</label>
    </ligand>
</feature>
<feature type="binding site" evidence="1">
    <location>
        <position position="93"/>
    </location>
    <ligand>
        <name>K(+)</name>
        <dbReference type="ChEBI" id="CHEBI:29103"/>
        <label>4</label>
    </ligand>
</feature>
<feature type="binding site" evidence="1">
    <location>
        <position position="94"/>
    </location>
    <ligand>
        <name>K(+)</name>
        <dbReference type="ChEBI" id="CHEBI:29103"/>
        <label>1</label>
    </ligand>
</feature>
<feature type="binding site" evidence="1">
    <location>
        <position position="94"/>
    </location>
    <ligand>
        <name>K(+)</name>
        <dbReference type="ChEBI" id="CHEBI:29103"/>
        <label>2</label>
    </ligand>
</feature>
<feature type="binding site" evidence="1">
    <location>
        <position position="95"/>
    </location>
    <ligand>
        <name>K(+)</name>
        <dbReference type="ChEBI" id="CHEBI:29103"/>
        <label>2</label>
    </ligand>
</feature>
<feature type="binding site" evidence="1">
    <location>
        <position position="95"/>
    </location>
    <ligand>
        <name>K(+)</name>
        <dbReference type="ChEBI" id="CHEBI:29103"/>
        <label>3</label>
    </ligand>
</feature>
<feature type="binding site" evidence="1">
    <location>
        <position position="96"/>
    </location>
    <ligand>
        <name>K(+)</name>
        <dbReference type="ChEBI" id="CHEBI:29103"/>
        <label>3</label>
    </ligand>
</feature>
<feature type="binding site" evidence="3">
    <location>
        <position position="199"/>
    </location>
    <ligand>
        <name>K(+)</name>
        <dbReference type="ChEBI" id="CHEBI:29103"/>
        <label>1</label>
    </ligand>
</feature>
<feature type="binding site" evidence="1">
    <location>
        <position position="199"/>
    </location>
    <ligand>
        <name>K(+)</name>
        <dbReference type="ChEBI" id="CHEBI:29103"/>
        <label>4</label>
    </ligand>
</feature>
<feature type="binding site" evidence="1">
    <location>
        <position position="200"/>
    </location>
    <ligand>
        <name>K(+)</name>
        <dbReference type="ChEBI" id="CHEBI:29103"/>
        <label>1</label>
    </ligand>
</feature>
<feature type="binding site" evidence="1">
    <location>
        <position position="200"/>
    </location>
    <ligand>
        <name>K(+)</name>
        <dbReference type="ChEBI" id="CHEBI:29103"/>
        <label>2</label>
    </ligand>
</feature>
<feature type="binding site" evidence="1">
    <location>
        <position position="201"/>
    </location>
    <ligand>
        <name>K(+)</name>
        <dbReference type="ChEBI" id="CHEBI:29103"/>
        <label>2</label>
    </ligand>
</feature>
<feature type="binding site" evidence="1">
    <location>
        <position position="201"/>
    </location>
    <ligand>
        <name>K(+)</name>
        <dbReference type="ChEBI" id="CHEBI:29103"/>
        <label>3</label>
    </ligand>
</feature>
<feature type="binding site" evidence="1">
    <location>
        <position position="202"/>
    </location>
    <ligand>
        <name>K(+)</name>
        <dbReference type="ChEBI" id="CHEBI:29103"/>
        <label>3</label>
    </ligand>
</feature>
<feature type="site" description="Forms a cation-pi interaction with protonated H-98, stabilizing the C-type inactivated state" evidence="3">
    <location>
        <position position="78"/>
    </location>
</feature>
<feature type="site" description="pH sensor" evidence="3">
    <location>
        <position position="98"/>
    </location>
</feature>
<feature type="glycosylation site" description="N-linked (GlcNAc...) asparagine" evidence="4">
    <location>
        <position position="53"/>
    </location>
</feature>
<keyword id="KW-1003">Cell membrane</keyword>
<keyword id="KW-0966">Cell projection</keyword>
<keyword id="KW-0325">Glycoprotein</keyword>
<keyword id="KW-0407">Ion channel</keyword>
<keyword id="KW-0406">Ion transport</keyword>
<keyword id="KW-0472">Membrane</keyword>
<keyword id="KW-0479">Metal-binding</keyword>
<keyword id="KW-0496">Mitochondrion</keyword>
<keyword id="KW-0999">Mitochondrion inner membrane</keyword>
<keyword id="KW-0630">Potassium</keyword>
<keyword id="KW-0631">Potassium channel</keyword>
<keyword id="KW-0633">Potassium transport</keyword>
<keyword id="KW-1185">Reference proteome</keyword>
<keyword id="KW-0915">Sodium</keyword>
<keyword id="KW-0894">Sodium channel</keyword>
<keyword id="KW-0739">Sodium transport</keyword>
<keyword id="KW-0812">Transmembrane</keyword>
<keyword id="KW-1133">Transmembrane helix</keyword>
<keyword id="KW-0813">Transport</keyword>
<gene>
    <name evidence="13" type="primary">Kcnk9</name>
    <name type="synonym">Task3</name>
</gene>
<accession>Q3LS21</accession>
<accession>B2RT82</accession>
<evidence type="ECO:0000250" key="1">
    <source>
        <dbReference type="UniProtKB" id="P57789"/>
    </source>
</evidence>
<evidence type="ECO:0000250" key="2">
    <source>
        <dbReference type="UniProtKB" id="Q9ES08"/>
    </source>
</evidence>
<evidence type="ECO:0000250" key="3">
    <source>
        <dbReference type="UniProtKB" id="Q9NPC2"/>
    </source>
</evidence>
<evidence type="ECO:0000255" key="4"/>
<evidence type="ECO:0000269" key="5">
    <source>
    </source>
</evidence>
<evidence type="ECO:0000269" key="6">
    <source>
    </source>
</evidence>
<evidence type="ECO:0000269" key="7">
    <source>
    </source>
</evidence>
<evidence type="ECO:0000269" key="8">
    <source>
    </source>
</evidence>
<evidence type="ECO:0000269" key="9">
    <source>
    </source>
</evidence>
<evidence type="ECO:0000269" key="10">
    <source>
    </source>
</evidence>
<evidence type="ECO:0000305" key="11"/>
<evidence type="ECO:0000305" key="12">
    <source>
    </source>
</evidence>
<evidence type="ECO:0000312" key="13">
    <source>
        <dbReference type="MGI" id="MGI:3521816"/>
    </source>
</evidence>
<dbReference type="EMBL" id="DQ185133">
    <property type="protein sequence ID" value="ABA28314.1"/>
    <property type="molecule type" value="mRNA"/>
</dbReference>
<dbReference type="EMBL" id="BC139167">
    <property type="protein sequence ID" value="AAI39168.1"/>
    <property type="molecule type" value="mRNA"/>
</dbReference>
<dbReference type="EMBL" id="BC139168">
    <property type="protein sequence ID" value="AAI39169.1"/>
    <property type="molecule type" value="mRNA"/>
</dbReference>
<dbReference type="CCDS" id="CCDS27515.1"/>
<dbReference type="RefSeq" id="NP_001029048.1">
    <property type="nucleotide sequence ID" value="NM_001033876.2"/>
</dbReference>
<dbReference type="SMR" id="Q3LS21"/>
<dbReference type="FunCoup" id="Q3LS21">
    <property type="interactions" value="58"/>
</dbReference>
<dbReference type="STRING" id="10090.ENSMUSP00000038729"/>
<dbReference type="GlyCosmos" id="Q3LS21">
    <property type="glycosylation" value="1 site, No reported glycans"/>
</dbReference>
<dbReference type="GlyGen" id="Q3LS21">
    <property type="glycosylation" value="1 site, 1 N-linked glycan (1 site)"/>
</dbReference>
<dbReference type="PhosphoSitePlus" id="Q3LS21"/>
<dbReference type="PaxDb" id="10090-ENSMUSP00000038729"/>
<dbReference type="Antibodypedia" id="27582">
    <property type="antibodies" value="99 antibodies from 23 providers"/>
</dbReference>
<dbReference type="DNASU" id="223604"/>
<dbReference type="Ensembl" id="ENSMUST00000044624.8">
    <property type="protein sequence ID" value="ENSMUSP00000038729.7"/>
    <property type="gene ID" value="ENSMUSG00000036760.8"/>
</dbReference>
<dbReference type="GeneID" id="223604"/>
<dbReference type="KEGG" id="mmu:223604"/>
<dbReference type="UCSC" id="uc007wbk.1">
    <property type="organism name" value="mouse"/>
</dbReference>
<dbReference type="AGR" id="MGI:3521816"/>
<dbReference type="CTD" id="51305"/>
<dbReference type="MGI" id="MGI:3521816">
    <property type="gene designation" value="Kcnk9"/>
</dbReference>
<dbReference type="VEuPathDB" id="HostDB:ENSMUSG00000036760"/>
<dbReference type="eggNOG" id="KOG4404">
    <property type="taxonomic scope" value="Eukaryota"/>
</dbReference>
<dbReference type="GeneTree" id="ENSGT00940000159791"/>
<dbReference type="HOGENOM" id="CLU_022504_4_0_1"/>
<dbReference type="InParanoid" id="Q3LS21"/>
<dbReference type="OMA" id="RSAPFCA"/>
<dbReference type="OrthoDB" id="297496at2759"/>
<dbReference type="PhylomeDB" id="Q3LS21"/>
<dbReference type="TreeFam" id="TF313947"/>
<dbReference type="Reactome" id="R-MMU-1299316">
    <property type="pathway name" value="TWIK-releated acid-sensitive K+ channel (TASK)"/>
</dbReference>
<dbReference type="Reactome" id="R-MMU-5576886">
    <property type="pathway name" value="Phase 4 - resting membrane potential"/>
</dbReference>
<dbReference type="BioGRID-ORCS" id="223604">
    <property type="hits" value="3 hits in 80 CRISPR screens"/>
</dbReference>
<dbReference type="PRO" id="PR:Q3LS21"/>
<dbReference type="Proteomes" id="UP000000589">
    <property type="component" value="Chromosome 15"/>
</dbReference>
<dbReference type="RNAct" id="Q3LS21">
    <property type="molecule type" value="protein"/>
</dbReference>
<dbReference type="Bgee" id="ENSMUSG00000036760">
    <property type="expression patterns" value="Expressed in lumbar subsegment of spinal cord and 76 other cell types or tissues"/>
</dbReference>
<dbReference type="GO" id="GO:0030425">
    <property type="term" value="C:dendrite"/>
    <property type="evidence" value="ECO:0007669"/>
    <property type="project" value="UniProtKB-SubCell"/>
</dbReference>
<dbReference type="GO" id="GO:0005743">
    <property type="term" value="C:mitochondrial inner membrane"/>
    <property type="evidence" value="ECO:0000314"/>
    <property type="project" value="UniProtKB"/>
</dbReference>
<dbReference type="GO" id="GO:0005886">
    <property type="term" value="C:plasma membrane"/>
    <property type="evidence" value="ECO:0000314"/>
    <property type="project" value="UniProtKB"/>
</dbReference>
<dbReference type="GO" id="GO:0008021">
    <property type="term" value="C:synaptic vesicle"/>
    <property type="evidence" value="ECO:0007669"/>
    <property type="project" value="Ensembl"/>
</dbReference>
<dbReference type="GO" id="GO:0042802">
    <property type="term" value="F:identical protein binding"/>
    <property type="evidence" value="ECO:0007669"/>
    <property type="project" value="Ensembl"/>
</dbReference>
<dbReference type="GO" id="GO:0046872">
    <property type="term" value="F:metal ion binding"/>
    <property type="evidence" value="ECO:0007669"/>
    <property type="project" value="UniProtKB-KW"/>
</dbReference>
<dbReference type="GO" id="GO:0015271">
    <property type="term" value="F:outward rectifier potassium channel activity"/>
    <property type="evidence" value="ECO:0000314"/>
    <property type="project" value="UniProtKB"/>
</dbReference>
<dbReference type="GO" id="GO:0005267">
    <property type="term" value="F:potassium channel activity"/>
    <property type="evidence" value="ECO:0000266"/>
    <property type="project" value="MGI"/>
</dbReference>
<dbReference type="GO" id="GO:0046982">
    <property type="term" value="F:protein heterodimerization activity"/>
    <property type="evidence" value="ECO:0000314"/>
    <property type="project" value="UniProtKB"/>
</dbReference>
<dbReference type="GO" id="GO:0005272">
    <property type="term" value="F:sodium channel activity"/>
    <property type="evidence" value="ECO:0007669"/>
    <property type="project" value="UniProtKB-KW"/>
</dbReference>
<dbReference type="GO" id="GO:0005249">
    <property type="term" value="F:voltage-gated potassium channel activity"/>
    <property type="evidence" value="ECO:0000314"/>
    <property type="project" value="MGI"/>
</dbReference>
<dbReference type="GO" id="GO:0071468">
    <property type="term" value="P:cellular response to acidic pH"/>
    <property type="evidence" value="ECO:0007669"/>
    <property type="project" value="Ensembl"/>
</dbReference>
<dbReference type="GO" id="GO:2000859">
    <property type="term" value="P:negative regulation of aldosterone secretion"/>
    <property type="evidence" value="ECO:0000315"/>
    <property type="project" value="UniProtKB"/>
</dbReference>
<dbReference type="GO" id="GO:1990573">
    <property type="term" value="P:potassium ion import across plasma membrane"/>
    <property type="evidence" value="ECO:0000314"/>
    <property type="project" value="MGI"/>
</dbReference>
<dbReference type="GO" id="GO:0099605">
    <property type="term" value="P:regulation of action potential firing rate"/>
    <property type="evidence" value="ECO:0000315"/>
    <property type="project" value="UniProtKB"/>
</dbReference>
<dbReference type="GO" id="GO:0060075">
    <property type="term" value="P:regulation of resting membrane potential"/>
    <property type="evidence" value="ECO:0000315"/>
    <property type="project" value="UniProtKB"/>
</dbReference>
<dbReference type="GO" id="GO:0007601">
    <property type="term" value="P:visual perception"/>
    <property type="evidence" value="ECO:0000315"/>
    <property type="project" value="UniProtKB"/>
</dbReference>
<dbReference type="FunFam" id="1.10.287.70:FF:000057">
    <property type="entry name" value="Potassium channel subfamily K member"/>
    <property type="match status" value="1"/>
</dbReference>
<dbReference type="Gene3D" id="1.10.287.70">
    <property type="match status" value="1"/>
</dbReference>
<dbReference type="InterPro" id="IPR003280">
    <property type="entry name" value="2pore_dom_K_chnl"/>
</dbReference>
<dbReference type="InterPro" id="IPR003092">
    <property type="entry name" value="2pore_dom_K_chnl_TASK"/>
</dbReference>
<dbReference type="InterPro" id="IPR013099">
    <property type="entry name" value="K_chnl_dom"/>
</dbReference>
<dbReference type="InterPro" id="IPR005407">
    <property type="entry name" value="KCNK9"/>
</dbReference>
<dbReference type="PANTHER" id="PTHR11003:SF75">
    <property type="entry name" value="POTASSIUM CHANNEL SUBFAMILY K MEMBER 9"/>
    <property type="match status" value="1"/>
</dbReference>
<dbReference type="PANTHER" id="PTHR11003">
    <property type="entry name" value="POTASSIUM CHANNEL, SUBFAMILY K"/>
    <property type="match status" value="1"/>
</dbReference>
<dbReference type="Pfam" id="PF07885">
    <property type="entry name" value="Ion_trans_2"/>
    <property type="match status" value="2"/>
</dbReference>
<dbReference type="PIRSF" id="PIRSF038061">
    <property type="entry name" value="K_channel_subfamily_K_type"/>
    <property type="match status" value="1"/>
</dbReference>
<dbReference type="PRINTS" id="PR01333">
    <property type="entry name" value="2POREKCHANEL"/>
</dbReference>
<dbReference type="PRINTS" id="PR01585">
    <property type="entry name" value="TASK3CHANNEL"/>
</dbReference>
<dbReference type="PRINTS" id="PR01095">
    <property type="entry name" value="TASKCHANNEL"/>
</dbReference>
<dbReference type="SUPFAM" id="SSF81324">
    <property type="entry name" value="Voltage-gated potassium channels"/>
    <property type="match status" value="2"/>
</dbReference>
<proteinExistence type="evidence at protein level"/>
<comment type="function">
    <text evidence="2 3 5 6 7 8 9 10">K(+) channel that conducts voltage-dependent outward rectifying currents upon membrane depolarization. Voltage sensing is coupled to K(+) electrochemical gradient in an 'ion flux gating' mode where outward but not inward ion flow opens the gate (By similarity). Changes ion selectivity and becomes permeable to Na(+) ions in response to extracellular acidification. Protonation of the pH sensor His-98 stabilizes C-type inactivation conformation likely converting the channel from outward K(+)-conducting, to inward Na(+)-conducting to nonconductive state (By similarity). Homo- and heterodimerizes to form functional channels with distinct regulatory and gating properties (By similarity). Allows K(+) currents with fast-gating kinetics important for the repolarization and hyperpolarization phases of action potentials (PubMed:17728447, PubMed:18250325, PubMed:30416196). In granule neurons, hyperpolarizes the resting membrane potential to limit intrinsic neuronal excitability, but once the action potential threshold is reached, supports high-frequency action potential firing and increased neuronal excitability. Homomeric and/or heteromeric KCNK3:KCNK9 channels operate in cerebellar granule cells, whereas heteromeric KCNK1:KCNK9 enables currents in hippocampal dentate gyrus granule neurons (PubMed:17728447, PubMed:30416196). Dispensable for central chemosensory respiration i.e. breathing controlled by brainstem CO2/pH, it rather conducts pH-sensitive currents and controls the firing rate of serotonergic raphe neurons involved in potentiation of the respiratory chemoreflex (PubMed:18094244). In retinal ganglion cells, mediates outward rectifying currents that regulate action potentials in response to acidification of the synaptic cleft. Involved in transmission of image-forming and nonimage-forming visual information in the retina (PubMed:36070380). In adrenal gland, contributes to the maintenance of a hyperpolarized resting membrane potential of aldosterone-producing cells at zona glomerulosa and limits aldosterone release as part of a regulatory mechanism that controls arterial blood pressure and electrolyte homeostasis (PubMed:18250325, PubMed:28630209).</text>
</comment>
<comment type="catalytic activity">
    <reaction evidence="5 9">
        <text>K(+)(in) = K(+)(out)</text>
        <dbReference type="Rhea" id="RHEA:29463"/>
        <dbReference type="ChEBI" id="CHEBI:29103"/>
    </reaction>
</comment>
<comment type="catalytic activity">
    <reaction evidence="3">
        <text>Na(+)(in) = Na(+)(out)</text>
        <dbReference type="Rhea" id="RHEA:34963"/>
        <dbReference type="ChEBI" id="CHEBI:29101"/>
    </reaction>
</comment>
<comment type="activity regulation">
    <text evidence="9">Inhibited by NTS:NTSR1 signaling in dentate gyrus granule cells.</text>
</comment>
<comment type="subunit">
    <text evidence="2 3 9">Homodimer (PubMed:30416196). Heterodimer with KCNK1 (PubMed:30416196). Heterodimer with KCNK3 (By similarity).</text>
</comment>
<comment type="subcellular location">
    <subcellularLocation>
        <location evidence="8 9">Cell membrane</location>
        <topology evidence="4">Multi-pass membrane protein</topology>
    </subcellularLocation>
    <subcellularLocation>
        <location evidence="12">Mitochondrion inner membrane</location>
        <topology evidence="4">Multi-pass membrane protein</topology>
    </subcellularLocation>
    <subcellularLocation>
        <location evidence="9">Cell projection</location>
        <location evidence="9">Dendrite</location>
    </subcellularLocation>
    <text evidence="9">Colocalizes with MAP2 in the soma and proximal dendrites of dentate gyrus granule cells.</text>
</comment>
<comment type="tissue specificity">
    <text evidence="7 9 10">Expressed in adrenal glands mainly in outer zona glomerulosa and inner zona medullaris (PubMed:18250325). Expressed in retinal ganglion cells (PubMed:36070380). Expressed in dentate gyrus (at protein level).</text>
</comment>
<comment type="domain">
    <text evidence="3">Each subunit contributes two pore-forming domains 1 and 2 which assemble to form a single pore with M2 and M4 transmembrane helices lining the central cavity and M1 and M3 facing the lipid bilayer. The transmembrane helices are bridged by the selectivity filters 1 and 2 carrying a signature sequence TxTTxG(Y/F)G(D/H) that coordinate the permeant ions. Up to four ions can simultaneously occupy the selectivity filter and at least two elementary charges must translocate across the filter to convert it into the open conformation.</text>
</comment>
<comment type="domain">
    <text evidence="3">The X-gate is positioned at the distal ends of M4 transmembrane helices forming a two-turn-helical structure with the methyl group of Thr-248 closing the ion conduction pathway.</text>
</comment>
<comment type="disruption phenotype">
    <text evidence="7">Double KCNK3 and KCNK9 knockout mice develop primary hyperaldosteronism and hypertension associated with bradycardia.</text>
</comment>
<comment type="similarity">
    <text evidence="11">Belongs to the two pore domain potassium channel (TC 1.A.1.8) family.</text>
</comment>
<organism>
    <name type="scientific">Mus musculus</name>
    <name type="common">Mouse</name>
    <dbReference type="NCBI Taxonomy" id="10090"/>
    <lineage>
        <taxon>Eukaryota</taxon>
        <taxon>Metazoa</taxon>
        <taxon>Chordata</taxon>
        <taxon>Craniata</taxon>
        <taxon>Vertebrata</taxon>
        <taxon>Euteleostomi</taxon>
        <taxon>Mammalia</taxon>
        <taxon>Eutheria</taxon>
        <taxon>Euarchontoglires</taxon>
        <taxon>Glires</taxon>
        <taxon>Rodentia</taxon>
        <taxon>Myomorpha</taxon>
        <taxon>Muroidea</taxon>
        <taxon>Muridae</taxon>
        <taxon>Murinae</taxon>
        <taxon>Mus</taxon>
        <taxon>Mus</taxon>
    </lineage>
</organism>
<protein>
    <recommendedName>
        <fullName>Potassium channel subfamily K member 9</fullName>
    </recommendedName>
    <alternativeName>
        <fullName>Acid-sensitive potassium channel protein TASK-3</fullName>
    </alternativeName>
    <alternativeName>
        <fullName>TWIK-related acid-sensitive K(+) channel 3</fullName>
    </alternativeName>
</protein>
<reference key="1">
    <citation type="submission" date="2005-08" db="EMBL/GenBank/DDBJ databases">
        <title>Zinc and mercuric ions distinguish mouse TRESK from the other two-pore-domain K+ channels.</title>
        <authorList>
            <person name="Czirjak G."/>
            <person name="Enyedi P."/>
        </authorList>
    </citation>
    <scope>NUCLEOTIDE SEQUENCE [MRNA]</scope>
    <source>
        <strain>NMRI</strain>
        <tissue>Cerebellum</tissue>
    </source>
</reference>
<reference key="2">
    <citation type="journal article" date="2004" name="Genome Res.">
        <title>The status, quality, and expansion of the NIH full-length cDNA project: the Mammalian Gene Collection (MGC).</title>
        <authorList>
            <consortium name="The MGC Project Team"/>
        </authorList>
    </citation>
    <scope>NUCLEOTIDE SEQUENCE [LARGE SCALE MRNA]</scope>
    <source>
        <tissue>Brain</tissue>
    </source>
</reference>
<reference key="3">
    <citation type="journal article" date="2007" name="J. Neurosci.">
        <title>TASK-3 two-pore domain potassium channels enable sustained high-frequency firing in cerebellar granule neurons.</title>
        <authorList>
            <person name="Brickley S.G."/>
            <person name="Aller M.I."/>
            <person name="Sandu C."/>
            <person name="Veale E.L."/>
            <person name="Alder F.G."/>
            <person name="Sambi H."/>
            <person name="Mathie A."/>
            <person name="Wisden W."/>
        </authorList>
    </citation>
    <scope>FUNCTION</scope>
    <scope>TRANSPORTER ACTIVITY</scope>
</reference>
<reference key="4">
    <citation type="journal article" date="2007" name="J. Neurosci.">
        <title>TASK channels determine pH sensitivity in select respiratory neurons but do not contribute to central respiratory chemosensitivity.</title>
        <authorList>
            <person name="Mulkey D.K."/>
            <person name="Talley E.M."/>
            <person name="Stornetta R.L."/>
            <person name="Siegel A.R."/>
            <person name="West G.H."/>
            <person name="Chen X."/>
            <person name="Sen N."/>
            <person name="Mistry A.M."/>
            <person name="Guyenet P.G."/>
            <person name="Bayliss D.A."/>
        </authorList>
    </citation>
    <scope>FUNCTION</scope>
</reference>
<reference key="5">
    <citation type="journal article" date="2008" name="Proc. Natl. Acad. Sci. U.S.A.">
        <title>TASK channel deletion in mice causes primary hyperaldosteronism.</title>
        <authorList>
            <person name="Davies L.A."/>
            <person name="Hu C."/>
            <person name="Guagliardo N.A."/>
            <person name="Sen N."/>
            <person name="Chen X."/>
            <person name="Talley E.M."/>
            <person name="Carey R.M."/>
            <person name="Bayliss D.A."/>
            <person name="Barrett P.Q."/>
        </authorList>
    </citation>
    <scope>FUNCTION</scope>
    <scope>DISRUPTION PHENOTYPE</scope>
    <scope>TISSUE SPECIFICITY</scope>
</reference>
<reference key="6">
    <citation type="journal article" date="2017" name="Hypertension">
        <title>Functional TASK-3-Like Channels in Mitochondria of Aldosterone-Producing Zona Glomerulosa Cells.</title>
        <authorList>
            <person name="Yao J."/>
            <person name="McHedlishvili D."/>
            <person name="McIntire W.E."/>
            <person name="Guagliardo N.A."/>
            <person name="Erisir A."/>
            <person name="Coburn C.A."/>
            <person name="Santarelli V.P."/>
            <person name="Bayliss D.A."/>
            <person name="Barrett P.Q."/>
        </authorList>
    </citation>
    <scope>FUNCTION</scope>
    <scope>SUBCELLULAR LOCATION</scope>
</reference>
<reference key="7">
    <citation type="journal article" date="2018" name="Exp. Mol. Med.">
        <title>TWIK-1/TASK-3 heterodimeric channels contribute to the neurotensin-mediated excitation of hippocampal dentate gyrus granule cells.</title>
        <authorList>
            <person name="Choi J.H."/>
            <person name="Yarishkin O."/>
            <person name="Kim E."/>
            <person name="Bae Y."/>
            <person name="Kim A."/>
            <person name="Kim S.C."/>
            <person name="Ryoo K."/>
            <person name="Cho C.H."/>
            <person name="Hwang E.M."/>
            <person name="Park J.Y."/>
        </authorList>
    </citation>
    <scope>FUNCTION</scope>
    <scope>TRANSPORTER ACTIVITY</scope>
    <scope>ACTIVITY REGULATION</scope>
    <scope>SUBCELLULAR LOCATION</scope>
    <scope>SUBUNIT</scope>
    <scope>INTERACTION WITH KCNK1</scope>
    <scope>TISSUE SPECIFICITY</scope>
</reference>
<reference key="8">
    <citation type="journal article" date="2022" name="Sci. Adv.">
        <title>Tandem pore domain acid-sensitive K channel 3 (TASK-3) regulates visual sensitivity in healthy and aging retina.</title>
        <authorList>
            <person name="Wen X."/>
            <person name="Liao P."/>
            <person name="Luo Y."/>
            <person name="Yang L."/>
            <person name="Yang H."/>
            <person name="Liu L."/>
            <person name="Jiang R."/>
        </authorList>
    </citation>
    <scope>FUNCTION</scope>
    <scope>TISSUE SPECIFICITY</scope>
</reference>
<name>KCNK9_MOUSE</name>
<sequence>MKRQNVRTLSLIACTFTYLLVGAAVFDALESDHEMREEEKLKAEEVRLRGKYNISSDDYQQLELVILQSEPHRAGVQWKFAGSFYFAITVITTIGYGHAAPGTDAGKAFCMFYAVLGIPLTLVMFQSLGERMNTFVRYLLKRIKKCCGMRNTEVSMENMVTVGFFSCMGTLCLGAAAFSQCEDWSFFHAYYYCFITLTTIGFGDFVALQAKGALQRKPFYVAFSFMYILVGLTVIGAFLNLVVLRFLTMNTDEELLEGEVAEILAGNPRRVSVRAPQRRKRHHAMYFLRKYGRTLCYLCFPGTNWGKDDDDDDDDDVVDNVVVTAPISAPAPAPAPAPAPAAVAAGATIRSVRATVHTVSCRVEEIPPDVLRNTYFRSVFGAIPPGMHTCGDHRLHLRRKSI</sequence>